<proteinExistence type="inferred from homology"/>
<gene>
    <name evidence="1" type="primary">glmU</name>
    <name type="ordered locus">glr0443</name>
</gene>
<comment type="function">
    <text evidence="1">Catalyzes the last two sequential reactions in the de novo biosynthetic pathway for UDP-N-acetylglucosamine (UDP-GlcNAc). The C-terminal domain catalyzes the transfer of acetyl group from acetyl coenzyme A to glucosamine-1-phosphate (GlcN-1-P) to produce N-acetylglucosamine-1-phosphate (GlcNAc-1-P), which is converted into UDP-GlcNAc by the transfer of uridine 5-monophosphate (from uridine 5-triphosphate), a reaction catalyzed by the N-terminal domain.</text>
</comment>
<comment type="catalytic activity">
    <reaction evidence="1">
        <text>alpha-D-glucosamine 1-phosphate + acetyl-CoA = N-acetyl-alpha-D-glucosamine 1-phosphate + CoA + H(+)</text>
        <dbReference type="Rhea" id="RHEA:13725"/>
        <dbReference type="ChEBI" id="CHEBI:15378"/>
        <dbReference type="ChEBI" id="CHEBI:57287"/>
        <dbReference type="ChEBI" id="CHEBI:57288"/>
        <dbReference type="ChEBI" id="CHEBI:57776"/>
        <dbReference type="ChEBI" id="CHEBI:58516"/>
        <dbReference type="EC" id="2.3.1.157"/>
    </reaction>
</comment>
<comment type="catalytic activity">
    <reaction evidence="1">
        <text>N-acetyl-alpha-D-glucosamine 1-phosphate + UTP + H(+) = UDP-N-acetyl-alpha-D-glucosamine + diphosphate</text>
        <dbReference type="Rhea" id="RHEA:13509"/>
        <dbReference type="ChEBI" id="CHEBI:15378"/>
        <dbReference type="ChEBI" id="CHEBI:33019"/>
        <dbReference type="ChEBI" id="CHEBI:46398"/>
        <dbReference type="ChEBI" id="CHEBI:57705"/>
        <dbReference type="ChEBI" id="CHEBI:57776"/>
        <dbReference type="EC" id="2.7.7.23"/>
    </reaction>
</comment>
<comment type="cofactor">
    <cofactor evidence="1">
        <name>Mg(2+)</name>
        <dbReference type="ChEBI" id="CHEBI:18420"/>
    </cofactor>
    <text evidence="1">Binds 1 Mg(2+) ion per subunit.</text>
</comment>
<comment type="pathway">
    <text evidence="1">Nucleotide-sugar biosynthesis; UDP-N-acetyl-alpha-D-glucosamine biosynthesis; N-acetyl-alpha-D-glucosamine 1-phosphate from alpha-D-glucosamine 6-phosphate (route II): step 2/2.</text>
</comment>
<comment type="pathway">
    <text evidence="1">Nucleotide-sugar biosynthesis; UDP-N-acetyl-alpha-D-glucosamine biosynthesis; UDP-N-acetyl-alpha-D-glucosamine from N-acetyl-alpha-D-glucosamine 1-phosphate: step 1/1.</text>
</comment>
<comment type="pathway">
    <text evidence="1">Bacterial outer membrane biogenesis; LPS lipid A biosynthesis.</text>
</comment>
<comment type="subunit">
    <text evidence="1">Homotrimer.</text>
</comment>
<comment type="subcellular location">
    <subcellularLocation>
        <location evidence="1">Cytoplasm</location>
    </subcellularLocation>
</comment>
<comment type="similarity">
    <text evidence="1">In the N-terminal section; belongs to the N-acetylglucosamine-1-phosphate uridyltransferase family.</text>
</comment>
<comment type="similarity">
    <text evidence="1">In the C-terminal section; belongs to the transferase hexapeptide repeat family.</text>
</comment>
<reference key="1">
    <citation type="journal article" date="2003" name="DNA Res.">
        <title>Complete genome structure of Gloeobacter violaceus PCC 7421, a cyanobacterium that lacks thylakoids.</title>
        <authorList>
            <person name="Nakamura Y."/>
            <person name="Kaneko T."/>
            <person name="Sato S."/>
            <person name="Mimuro M."/>
            <person name="Miyashita H."/>
            <person name="Tsuchiya T."/>
            <person name="Sasamoto S."/>
            <person name="Watanabe A."/>
            <person name="Kawashima K."/>
            <person name="Kishida Y."/>
            <person name="Kiyokawa C."/>
            <person name="Kohara M."/>
            <person name="Matsumoto M."/>
            <person name="Matsuno A."/>
            <person name="Nakazaki N."/>
            <person name="Shimpo S."/>
            <person name="Takeuchi C."/>
            <person name="Yamada M."/>
            <person name="Tabata S."/>
        </authorList>
    </citation>
    <scope>NUCLEOTIDE SEQUENCE [LARGE SCALE GENOMIC DNA]</scope>
    <source>
        <strain>ATCC 29082 / PCC 7421</strain>
    </source>
</reference>
<accession>Q7NNG8</accession>
<name>GLMU_GLOVI</name>
<sequence>MSARLAAIVLAAGKGTRMRSTLPKVLHPLAGSTILERVLAALGELALAECFIVVGQGAELVRGRIARPGVQFVEQTEQRGTGHAVQQVIPHLEGFEGEVLVLNGDAPLLRPSTVAHLVEKHRSFAADATILAARIADPGGYGRVFLDADGRVRQVIEDRDCTEEQRRNDLINGGVYCFRWPALMTVLPALSADNDQGELYLPDALPMLTHVRAVAVEDPQEIFGINDRLQLSQASRILNERTLVGLMLSGVTIVDPLRVTIDETVEIEPDVVIEPETHLRGATRIAGGCRIGPGTLLEDTVVGAGTEILYSVLRRSRVGAHSTIGPYSHLRPGADVGSHCRVGNYVEIKNATIGDHTNAAHLSYVGDASVGERVNFGAGTIVVNYDGKHKHRTEIGDGVRTGANSCLVAPLKLGDGVTVAAGSTVTEDVPCGLVIARSRQVVKPDWKAPYERTEDG</sequence>
<feature type="chain" id="PRO_0000233777" description="Bifunctional protein GlmU">
    <location>
        <begin position="1"/>
        <end position="456"/>
    </location>
</feature>
<feature type="region of interest" description="Pyrophosphorylase" evidence="1">
    <location>
        <begin position="1"/>
        <end position="228"/>
    </location>
</feature>
<feature type="region of interest" description="Linker" evidence="1">
    <location>
        <begin position="229"/>
        <end position="249"/>
    </location>
</feature>
<feature type="region of interest" description="N-acetyltransferase" evidence="1">
    <location>
        <begin position="250"/>
        <end position="456"/>
    </location>
</feature>
<feature type="active site" description="Proton acceptor" evidence="1">
    <location>
        <position position="361"/>
    </location>
</feature>
<feature type="binding site" evidence="1">
    <location>
        <begin position="10"/>
        <end position="13"/>
    </location>
    <ligand>
        <name>UDP-N-acetyl-alpha-D-glucosamine</name>
        <dbReference type="ChEBI" id="CHEBI:57705"/>
    </ligand>
</feature>
<feature type="binding site" evidence="1">
    <location>
        <position position="24"/>
    </location>
    <ligand>
        <name>UDP-N-acetyl-alpha-D-glucosamine</name>
        <dbReference type="ChEBI" id="CHEBI:57705"/>
    </ligand>
</feature>
<feature type="binding site" evidence="1">
    <location>
        <position position="75"/>
    </location>
    <ligand>
        <name>UDP-N-acetyl-alpha-D-glucosamine</name>
        <dbReference type="ChEBI" id="CHEBI:57705"/>
    </ligand>
</feature>
<feature type="binding site" evidence="1">
    <location>
        <begin position="80"/>
        <end position="81"/>
    </location>
    <ligand>
        <name>UDP-N-acetyl-alpha-D-glucosamine</name>
        <dbReference type="ChEBI" id="CHEBI:57705"/>
    </ligand>
</feature>
<feature type="binding site" evidence="1">
    <location>
        <position position="105"/>
    </location>
    <ligand>
        <name>Mg(2+)</name>
        <dbReference type="ChEBI" id="CHEBI:18420"/>
    </ligand>
</feature>
<feature type="binding site" evidence="1">
    <location>
        <position position="142"/>
    </location>
    <ligand>
        <name>UDP-N-acetyl-alpha-D-glucosamine</name>
        <dbReference type="ChEBI" id="CHEBI:57705"/>
    </ligand>
</feature>
<feature type="binding site" evidence="1">
    <location>
        <position position="157"/>
    </location>
    <ligand>
        <name>UDP-N-acetyl-alpha-D-glucosamine</name>
        <dbReference type="ChEBI" id="CHEBI:57705"/>
    </ligand>
</feature>
<feature type="binding site" evidence="1">
    <location>
        <position position="172"/>
    </location>
    <ligand>
        <name>UDP-N-acetyl-alpha-D-glucosamine</name>
        <dbReference type="ChEBI" id="CHEBI:57705"/>
    </ligand>
</feature>
<feature type="binding site" evidence="1">
    <location>
        <position position="226"/>
    </location>
    <ligand>
        <name>Mg(2+)</name>
        <dbReference type="ChEBI" id="CHEBI:18420"/>
    </ligand>
</feature>
<feature type="binding site" evidence="1">
    <location>
        <position position="226"/>
    </location>
    <ligand>
        <name>UDP-N-acetyl-alpha-D-glucosamine</name>
        <dbReference type="ChEBI" id="CHEBI:57705"/>
    </ligand>
</feature>
<feature type="binding site" evidence="1">
    <location>
        <position position="331"/>
    </location>
    <ligand>
        <name>UDP-N-acetyl-alpha-D-glucosamine</name>
        <dbReference type="ChEBI" id="CHEBI:57705"/>
    </ligand>
</feature>
<feature type="binding site" evidence="1">
    <location>
        <position position="349"/>
    </location>
    <ligand>
        <name>UDP-N-acetyl-alpha-D-glucosamine</name>
        <dbReference type="ChEBI" id="CHEBI:57705"/>
    </ligand>
</feature>
<feature type="binding site" evidence="1">
    <location>
        <position position="364"/>
    </location>
    <ligand>
        <name>UDP-N-acetyl-alpha-D-glucosamine</name>
        <dbReference type="ChEBI" id="CHEBI:57705"/>
    </ligand>
</feature>
<feature type="binding site" evidence="1">
    <location>
        <position position="375"/>
    </location>
    <ligand>
        <name>UDP-N-acetyl-alpha-D-glucosamine</name>
        <dbReference type="ChEBI" id="CHEBI:57705"/>
    </ligand>
</feature>
<feature type="binding site" evidence="1">
    <location>
        <position position="378"/>
    </location>
    <ligand>
        <name>acetyl-CoA</name>
        <dbReference type="ChEBI" id="CHEBI:57288"/>
    </ligand>
</feature>
<feature type="binding site" evidence="1">
    <location>
        <begin position="384"/>
        <end position="385"/>
    </location>
    <ligand>
        <name>acetyl-CoA</name>
        <dbReference type="ChEBI" id="CHEBI:57288"/>
    </ligand>
</feature>
<feature type="binding site" evidence="1">
    <location>
        <position position="421"/>
    </location>
    <ligand>
        <name>acetyl-CoA</name>
        <dbReference type="ChEBI" id="CHEBI:57288"/>
    </ligand>
</feature>
<feature type="binding site" evidence="1">
    <location>
        <position position="437"/>
    </location>
    <ligand>
        <name>acetyl-CoA</name>
        <dbReference type="ChEBI" id="CHEBI:57288"/>
    </ligand>
</feature>
<keyword id="KW-0012">Acyltransferase</keyword>
<keyword id="KW-0133">Cell shape</keyword>
<keyword id="KW-0961">Cell wall biogenesis/degradation</keyword>
<keyword id="KW-0963">Cytoplasm</keyword>
<keyword id="KW-0460">Magnesium</keyword>
<keyword id="KW-0479">Metal-binding</keyword>
<keyword id="KW-0511">Multifunctional enzyme</keyword>
<keyword id="KW-0548">Nucleotidyltransferase</keyword>
<keyword id="KW-0573">Peptidoglycan synthesis</keyword>
<keyword id="KW-1185">Reference proteome</keyword>
<keyword id="KW-0677">Repeat</keyword>
<keyword id="KW-0808">Transferase</keyword>
<protein>
    <recommendedName>
        <fullName evidence="1">Bifunctional protein GlmU</fullName>
    </recommendedName>
    <domain>
        <recommendedName>
            <fullName evidence="1">UDP-N-acetylglucosamine pyrophosphorylase</fullName>
            <ecNumber evidence="1">2.7.7.23</ecNumber>
        </recommendedName>
        <alternativeName>
            <fullName evidence="1">N-acetylglucosamine-1-phosphate uridyltransferase</fullName>
        </alternativeName>
    </domain>
    <domain>
        <recommendedName>
            <fullName evidence="1">Glucosamine-1-phosphate N-acetyltransferase</fullName>
            <ecNumber evidence="1">2.3.1.157</ecNumber>
        </recommendedName>
    </domain>
</protein>
<evidence type="ECO:0000255" key="1">
    <source>
        <dbReference type="HAMAP-Rule" id="MF_01631"/>
    </source>
</evidence>
<organism>
    <name type="scientific">Gloeobacter violaceus (strain ATCC 29082 / PCC 7421)</name>
    <dbReference type="NCBI Taxonomy" id="251221"/>
    <lineage>
        <taxon>Bacteria</taxon>
        <taxon>Bacillati</taxon>
        <taxon>Cyanobacteriota</taxon>
        <taxon>Cyanophyceae</taxon>
        <taxon>Gloeobacterales</taxon>
        <taxon>Gloeobacteraceae</taxon>
        <taxon>Gloeobacter</taxon>
    </lineage>
</organism>
<dbReference type="EC" id="2.7.7.23" evidence="1"/>
<dbReference type="EC" id="2.3.1.157" evidence="1"/>
<dbReference type="EMBL" id="BA000045">
    <property type="protein sequence ID" value="BAC88384.1"/>
    <property type="molecule type" value="Genomic_DNA"/>
</dbReference>
<dbReference type="RefSeq" id="NP_923389.1">
    <property type="nucleotide sequence ID" value="NC_005125.1"/>
</dbReference>
<dbReference type="RefSeq" id="WP_011140446.1">
    <property type="nucleotide sequence ID" value="NC_005125.1"/>
</dbReference>
<dbReference type="SMR" id="Q7NNG8"/>
<dbReference type="FunCoup" id="Q7NNG8">
    <property type="interactions" value="81"/>
</dbReference>
<dbReference type="STRING" id="251221.gene:10757915"/>
<dbReference type="EnsemblBacteria" id="BAC88384">
    <property type="protein sequence ID" value="BAC88384"/>
    <property type="gene ID" value="BAC88384"/>
</dbReference>
<dbReference type="KEGG" id="gvi:glr0443"/>
<dbReference type="PATRIC" id="fig|251221.4.peg.451"/>
<dbReference type="eggNOG" id="COG1207">
    <property type="taxonomic scope" value="Bacteria"/>
</dbReference>
<dbReference type="HOGENOM" id="CLU_029499_15_2_3"/>
<dbReference type="InParanoid" id="Q7NNG8"/>
<dbReference type="OrthoDB" id="9775031at2"/>
<dbReference type="PhylomeDB" id="Q7NNG8"/>
<dbReference type="UniPathway" id="UPA00113">
    <property type="reaction ID" value="UER00532"/>
</dbReference>
<dbReference type="UniPathway" id="UPA00113">
    <property type="reaction ID" value="UER00533"/>
</dbReference>
<dbReference type="UniPathway" id="UPA00973"/>
<dbReference type="Proteomes" id="UP000000557">
    <property type="component" value="Chromosome"/>
</dbReference>
<dbReference type="GO" id="GO:0031470">
    <property type="term" value="C:carboxysome"/>
    <property type="evidence" value="ECO:0007669"/>
    <property type="project" value="UniProtKB-ARBA"/>
</dbReference>
<dbReference type="GO" id="GO:0005737">
    <property type="term" value="C:cytoplasm"/>
    <property type="evidence" value="ECO:0007669"/>
    <property type="project" value="UniProtKB-SubCell"/>
</dbReference>
<dbReference type="GO" id="GO:0016020">
    <property type="term" value="C:membrane"/>
    <property type="evidence" value="ECO:0007669"/>
    <property type="project" value="GOC"/>
</dbReference>
<dbReference type="GO" id="GO:0019134">
    <property type="term" value="F:glucosamine-1-phosphate N-acetyltransferase activity"/>
    <property type="evidence" value="ECO:0007669"/>
    <property type="project" value="UniProtKB-UniRule"/>
</dbReference>
<dbReference type="GO" id="GO:0000287">
    <property type="term" value="F:magnesium ion binding"/>
    <property type="evidence" value="ECO:0007669"/>
    <property type="project" value="UniProtKB-UniRule"/>
</dbReference>
<dbReference type="GO" id="GO:0043886">
    <property type="term" value="F:structural constituent of carboxysome shell"/>
    <property type="evidence" value="ECO:0007669"/>
    <property type="project" value="UniProtKB-ARBA"/>
</dbReference>
<dbReference type="GO" id="GO:0003977">
    <property type="term" value="F:UDP-N-acetylglucosamine diphosphorylase activity"/>
    <property type="evidence" value="ECO:0007669"/>
    <property type="project" value="UniProtKB-UniRule"/>
</dbReference>
<dbReference type="GO" id="GO:0000902">
    <property type="term" value="P:cell morphogenesis"/>
    <property type="evidence" value="ECO:0007669"/>
    <property type="project" value="UniProtKB-UniRule"/>
</dbReference>
<dbReference type="GO" id="GO:0071555">
    <property type="term" value="P:cell wall organization"/>
    <property type="evidence" value="ECO:0007669"/>
    <property type="project" value="UniProtKB-KW"/>
</dbReference>
<dbReference type="GO" id="GO:0009245">
    <property type="term" value="P:lipid A biosynthetic process"/>
    <property type="evidence" value="ECO:0007669"/>
    <property type="project" value="UniProtKB-UniRule"/>
</dbReference>
<dbReference type="GO" id="GO:0009252">
    <property type="term" value="P:peptidoglycan biosynthetic process"/>
    <property type="evidence" value="ECO:0007669"/>
    <property type="project" value="UniProtKB-UniRule"/>
</dbReference>
<dbReference type="GO" id="GO:0008360">
    <property type="term" value="P:regulation of cell shape"/>
    <property type="evidence" value="ECO:0007669"/>
    <property type="project" value="UniProtKB-KW"/>
</dbReference>
<dbReference type="GO" id="GO:0006048">
    <property type="term" value="P:UDP-N-acetylglucosamine biosynthetic process"/>
    <property type="evidence" value="ECO:0007669"/>
    <property type="project" value="UniProtKB-UniPathway"/>
</dbReference>
<dbReference type="CDD" id="cd02540">
    <property type="entry name" value="GT2_GlmU_N_bac"/>
    <property type="match status" value="1"/>
</dbReference>
<dbReference type="CDD" id="cd03353">
    <property type="entry name" value="LbH_GlmU_C"/>
    <property type="match status" value="1"/>
</dbReference>
<dbReference type="Gene3D" id="2.160.10.10">
    <property type="entry name" value="Hexapeptide repeat proteins"/>
    <property type="match status" value="1"/>
</dbReference>
<dbReference type="Gene3D" id="3.90.550.10">
    <property type="entry name" value="Spore Coat Polysaccharide Biosynthesis Protein SpsA, Chain A"/>
    <property type="match status" value="1"/>
</dbReference>
<dbReference type="HAMAP" id="MF_01631">
    <property type="entry name" value="GlmU"/>
    <property type="match status" value="1"/>
</dbReference>
<dbReference type="InterPro" id="IPR005882">
    <property type="entry name" value="Bifunctional_GlmU"/>
</dbReference>
<dbReference type="InterPro" id="IPR050065">
    <property type="entry name" value="GlmU-like"/>
</dbReference>
<dbReference type="InterPro" id="IPR038009">
    <property type="entry name" value="GlmU_C_LbH"/>
</dbReference>
<dbReference type="InterPro" id="IPR001451">
    <property type="entry name" value="Hexapep"/>
</dbReference>
<dbReference type="InterPro" id="IPR025877">
    <property type="entry name" value="MobA-like_NTP_Trfase"/>
</dbReference>
<dbReference type="InterPro" id="IPR029044">
    <property type="entry name" value="Nucleotide-diphossugar_trans"/>
</dbReference>
<dbReference type="InterPro" id="IPR011004">
    <property type="entry name" value="Trimer_LpxA-like_sf"/>
</dbReference>
<dbReference type="NCBIfam" id="TIGR01173">
    <property type="entry name" value="glmU"/>
    <property type="match status" value="1"/>
</dbReference>
<dbReference type="NCBIfam" id="NF010940">
    <property type="entry name" value="PRK14360.1"/>
    <property type="match status" value="1"/>
</dbReference>
<dbReference type="PANTHER" id="PTHR43584:SF3">
    <property type="entry name" value="BIFUNCTIONAL PROTEIN GLMU"/>
    <property type="match status" value="1"/>
</dbReference>
<dbReference type="PANTHER" id="PTHR43584">
    <property type="entry name" value="NUCLEOTIDYL TRANSFERASE"/>
    <property type="match status" value="1"/>
</dbReference>
<dbReference type="Pfam" id="PF00132">
    <property type="entry name" value="Hexapep"/>
    <property type="match status" value="1"/>
</dbReference>
<dbReference type="Pfam" id="PF14602">
    <property type="entry name" value="Hexapep_2"/>
    <property type="match status" value="1"/>
</dbReference>
<dbReference type="Pfam" id="PF12804">
    <property type="entry name" value="NTP_transf_3"/>
    <property type="match status" value="1"/>
</dbReference>
<dbReference type="SUPFAM" id="SSF53448">
    <property type="entry name" value="Nucleotide-diphospho-sugar transferases"/>
    <property type="match status" value="1"/>
</dbReference>
<dbReference type="SUPFAM" id="SSF51161">
    <property type="entry name" value="Trimeric LpxA-like enzymes"/>
    <property type="match status" value="1"/>
</dbReference>